<evidence type="ECO:0000255" key="1">
    <source>
        <dbReference type="HAMAP-Rule" id="MF_00600"/>
    </source>
</evidence>
<feature type="chain" id="PRO_0000063284" description="Chaperonin GroEL">
    <location>
        <begin position="1"/>
        <end position="547"/>
    </location>
</feature>
<feature type="binding site" evidence="1">
    <location>
        <begin position="30"/>
        <end position="33"/>
    </location>
    <ligand>
        <name>ATP</name>
        <dbReference type="ChEBI" id="CHEBI:30616"/>
    </ligand>
</feature>
<feature type="binding site" evidence="1">
    <location>
        <position position="51"/>
    </location>
    <ligand>
        <name>ATP</name>
        <dbReference type="ChEBI" id="CHEBI:30616"/>
    </ligand>
</feature>
<feature type="binding site" evidence="1">
    <location>
        <begin position="87"/>
        <end position="91"/>
    </location>
    <ligand>
        <name>ATP</name>
        <dbReference type="ChEBI" id="CHEBI:30616"/>
    </ligand>
</feature>
<feature type="binding site" evidence="1">
    <location>
        <position position="415"/>
    </location>
    <ligand>
        <name>ATP</name>
        <dbReference type="ChEBI" id="CHEBI:30616"/>
    </ligand>
</feature>
<feature type="binding site" evidence="1">
    <location>
        <position position="495"/>
    </location>
    <ligand>
        <name>ATP</name>
        <dbReference type="ChEBI" id="CHEBI:30616"/>
    </ligand>
</feature>
<sequence length="547" mass="57610">MAAKEVKFGREARERLLRGVDILANAVKVTLGPKGRNVVIDKSFGAPRITKDGVSVAKEIELEDKFENMGAQMLREVASKTNDIAGDGTTTATVLGQAIVQEGVKAVAAGMNPMDLKRGIDAAVEEVVGNLFKKAKKIQTSAEIAQVGTISANGAAEIGKMIADAMEKVGNEGVITVEEAKTAETELEVVEGMQFDRGYLSPYFVTNADKMVADLDDPYILIHEKKLSNLQSLLPVLEAVVQSGKPLLIIAEDVEGEALATLVVNKLRGGLKIAAVKAPGFGDRRKAMLEDIAILTSGQVISEDVGIKLENVTLDMLGRAKKVNISKENTTIIDGAGKKAEINARVNQIKVQIEETTSDYDREKLQERLAKLAGGVAVIRVGGATEVEVKEKKDRVDDALNATRAAVEEGIVAGGGTALLRAANALAIKGSNPDQEAGINIVRRALQAPARQIATNAGEEAAIIVGKVLENNADTFGYNTATGQFGDLIALGIVDPVKVVRSALQNAASIASLLITTEAMVAEVPKKDTPMPPMPGGGMGGMGGMDF</sequence>
<gene>
    <name evidence="1" type="primary">groEL</name>
    <name evidence="1" type="synonym">groL</name>
    <name type="synonym">mopA</name>
    <name type="ordered locus">BQ10750</name>
</gene>
<keyword id="KW-0067">ATP-binding</keyword>
<keyword id="KW-0143">Chaperone</keyword>
<keyword id="KW-0963">Cytoplasm</keyword>
<keyword id="KW-0413">Isomerase</keyword>
<keyword id="KW-0547">Nucleotide-binding</keyword>
<keyword id="KW-0346">Stress response</keyword>
<name>CH60_BARQU</name>
<accession>O33964</accession>
<accession>Q6FYV0</accession>
<reference key="1">
    <citation type="journal article" date="1997" name="Microbiology">
        <title>Heat shock response and groEL sequence of Bartonella henselae and Bartonella quintana.</title>
        <authorList>
            <person name="Haake D.A."/>
            <person name="Summers T.A."/>
            <person name="McCoy A.M."/>
            <person name="Schwartzman W."/>
        </authorList>
    </citation>
    <scope>NUCLEOTIDE SEQUENCE [GENOMIC DNA]</scope>
    <source>
        <strain>ATCC 51694 / 90-268</strain>
    </source>
</reference>
<reference key="2">
    <citation type="journal article" date="2004" name="Proc. Natl. Acad. Sci. U.S.A.">
        <title>The louse-borne human pathogen Bartonella quintana is a genomic derivative of the zoonotic agent Bartonella henselae.</title>
        <authorList>
            <person name="Alsmark U.C.M."/>
            <person name="Frank A.C."/>
            <person name="Karlberg E.O."/>
            <person name="Legault B.-A."/>
            <person name="Ardell D.H."/>
            <person name="Canbaeck B."/>
            <person name="Eriksson A.-S."/>
            <person name="Naeslund A.K."/>
            <person name="Handley S.A."/>
            <person name="Huvet M."/>
            <person name="La Scola B."/>
            <person name="Holmberg M."/>
            <person name="Andersson S.G.E."/>
        </authorList>
    </citation>
    <scope>NUCLEOTIDE SEQUENCE [LARGE SCALE GENOMIC DNA]</scope>
    <source>
        <strain>Toulouse</strain>
    </source>
</reference>
<protein>
    <recommendedName>
        <fullName evidence="1">Chaperonin GroEL</fullName>
        <ecNumber evidence="1">5.6.1.7</ecNumber>
    </recommendedName>
    <alternativeName>
        <fullName evidence="1">60 kDa chaperonin</fullName>
    </alternativeName>
    <alternativeName>
        <fullName evidence="1">Chaperonin-60</fullName>
        <shortName evidence="1">Cpn60</shortName>
    </alternativeName>
</protein>
<comment type="function">
    <text evidence="1">Together with its co-chaperonin GroES, plays an essential role in assisting protein folding. The GroEL-GroES system forms a nano-cage that allows encapsulation of the non-native substrate proteins and provides a physical environment optimized to promote and accelerate protein folding.</text>
</comment>
<comment type="catalytic activity">
    <reaction evidence="1">
        <text>ATP + H2O + a folded polypeptide = ADP + phosphate + an unfolded polypeptide.</text>
        <dbReference type="EC" id="5.6.1.7"/>
    </reaction>
</comment>
<comment type="subunit">
    <text evidence="1">Forms a cylinder of 14 subunits composed of two heptameric rings stacked back-to-back. Interacts with the co-chaperonin GroES.</text>
</comment>
<comment type="subcellular location">
    <subcellularLocation>
        <location evidence="1">Cytoplasm</location>
    </subcellularLocation>
</comment>
<comment type="similarity">
    <text evidence="1">Belongs to the chaperonin (HSP60) family.</text>
</comment>
<proteinExistence type="inferred from homology"/>
<organism>
    <name type="scientific">Bartonella quintana (strain Toulouse)</name>
    <name type="common">Rochalimaea quintana</name>
    <dbReference type="NCBI Taxonomy" id="283165"/>
    <lineage>
        <taxon>Bacteria</taxon>
        <taxon>Pseudomonadati</taxon>
        <taxon>Pseudomonadota</taxon>
        <taxon>Alphaproteobacteria</taxon>
        <taxon>Hyphomicrobiales</taxon>
        <taxon>Bartonellaceae</taxon>
        <taxon>Bartonella</taxon>
    </lineage>
</organism>
<dbReference type="EC" id="5.6.1.7" evidence="1"/>
<dbReference type="EMBL" id="U78515">
    <property type="protein sequence ID" value="AAB69095.1"/>
    <property type="molecule type" value="Genomic_DNA"/>
</dbReference>
<dbReference type="EMBL" id="BX897700">
    <property type="protein sequence ID" value="CAF26542.1"/>
    <property type="molecule type" value="Genomic_DNA"/>
</dbReference>
<dbReference type="RefSeq" id="WP_011179743.1">
    <property type="nucleotide sequence ID" value="NC_005955.1"/>
</dbReference>
<dbReference type="SMR" id="O33964"/>
<dbReference type="KEGG" id="bqu:BQ10750"/>
<dbReference type="eggNOG" id="COG0459">
    <property type="taxonomic scope" value="Bacteria"/>
</dbReference>
<dbReference type="HOGENOM" id="CLU_016503_3_0_5"/>
<dbReference type="OrthoDB" id="9766614at2"/>
<dbReference type="Proteomes" id="UP000000597">
    <property type="component" value="Chromosome"/>
</dbReference>
<dbReference type="GO" id="GO:0005737">
    <property type="term" value="C:cytoplasm"/>
    <property type="evidence" value="ECO:0007669"/>
    <property type="project" value="UniProtKB-SubCell"/>
</dbReference>
<dbReference type="GO" id="GO:0005524">
    <property type="term" value="F:ATP binding"/>
    <property type="evidence" value="ECO:0007669"/>
    <property type="project" value="UniProtKB-UniRule"/>
</dbReference>
<dbReference type="GO" id="GO:0140662">
    <property type="term" value="F:ATP-dependent protein folding chaperone"/>
    <property type="evidence" value="ECO:0007669"/>
    <property type="project" value="InterPro"/>
</dbReference>
<dbReference type="GO" id="GO:0016853">
    <property type="term" value="F:isomerase activity"/>
    <property type="evidence" value="ECO:0007669"/>
    <property type="project" value="UniProtKB-KW"/>
</dbReference>
<dbReference type="GO" id="GO:0051082">
    <property type="term" value="F:unfolded protein binding"/>
    <property type="evidence" value="ECO:0007669"/>
    <property type="project" value="UniProtKB-UniRule"/>
</dbReference>
<dbReference type="GO" id="GO:0042026">
    <property type="term" value="P:protein refolding"/>
    <property type="evidence" value="ECO:0007669"/>
    <property type="project" value="UniProtKB-UniRule"/>
</dbReference>
<dbReference type="CDD" id="cd03344">
    <property type="entry name" value="GroEL"/>
    <property type="match status" value="1"/>
</dbReference>
<dbReference type="FunFam" id="1.10.560.10:FF:000001">
    <property type="entry name" value="60 kDa chaperonin"/>
    <property type="match status" value="1"/>
</dbReference>
<dbReference type="FunFam" id="3.50.7.10:FF:000001">
    <property type="entry name" value="60 kDa chaperonin"/>
    <property type="match status" value="1"/>
</dbReference>
<dbReference type="Gene3D" id="3.50.7.10">
    <property type="entry name" value="GroEL"/>
    <property type="match status" value="1"/>
</dbReference>
<dbReference type="Gene3D" id="1.10.560.10">
    <property type="entry name" value="GroEL-like equatorial domain"/>
    <property type="match status" value="1"/>
</dbReference>
<dbReference type="Gene3D" id="3.30.260.10">
    <property type="entry name" value="TCP-1-like chaperonin intermediate domain"/>
    <property type="match status" value="1"/>
</dbReference>
<dbReference type="HAMAP" id="MF_00600">
    <property type="entry name" value="CH60"/>
    <property type="match status" value="1"/>
</dbReference>
<dbReference type="InterPro" id="IPR018370">
    <property type="entry name" value="Chaperonin_Cpn60_CS"/>
</dbReference>
<dbReference type="InterPro" id="IPR001844">
    <property type="entry name" value="Cpn60/GroEL"/>
</dbReference>
<dbReference type="InterPro" id="IPR002423">
    <property type="entry name" value="Cpn60/GroEL/TCP-1"/>
</dbReference>
<dbReference type="InterPro" id="IPR027409">
    <property type="entry name" value="GroEL-like_apical_dom_sf"/>
</dbReference>
<dbReference type="InterPro" id="IPR027413">
    <property type="entry name" value="GROEL-like_equatorial_sf"/>
</dbReference>
<dbReference type="InterPro" id="IPR027410">
    <property type="entry name" value="TCP-1-like_intermed_sf"/>
</dbReference>
<dbReference type="NCBIfam" id="TIGR02348">
    <property type="entry name" value="GroEL"/>
    <property type="match status" value="1"/>
</dbReference>
<dbReference type="NCBIfam" id="NF000592">
    <property type="entry name" value="PRK00013.1"/>
    <property type="match status" value="1"/>
</dbReference>
<dbReference type="NCBIfam" id="NF009487">
    <property type="entry name" value="PRK12849.1"/>
    <property type="match status" value="1"/>
</dbReference>
<dbReference type="NCBIfam" id="NF009488">
    <property type="entry name" value="PRK12850.1"/>
    <property type="match status" value="1"/>
</dbReference>
<dbReference type="NCBIfam" id="NF009489">
    <property type="entry name" value="PRK12851.1"/>
    <property type="match status" value="1"/>
</dbReference>
<dbReference type="PANTHER" id="PTHR45633">
    <property type="entry name" value="60 KDA HEAT SHOCK PROTEIN, MITOCHONDRIAL"/>
    <property type="match status" value="1"/>
</dbReference>
<dbReference type="Pfam" id="PF00118">
    <property type="entry name" value="Cpn60_TCP1"/>
    <property type="match status" value="1"/>
</dbReference>
<dbReference type="PRINTS" id="PR00298">
    <property type="entry name" value="CHAPERONIN60"/>
</dbReference>
<dbReference type="SUPFAM" id="SSF52029">
    <property type="entry name" value="GroEL apical domain-like"/>
    <property type="match status" value="1"/>
</dbReference>
<dbReference type="SUPFAM" id="SSF48592">
    <property type="entry name" value="GroEL equatorial domain-like"/>
    <property type="match status" value="1"/>
</dbReference>
<dbReference type="SUPFAM" id="SSF54849">
    <property type="entry name" value="GroEL-intermediate domain like"/>
    <property type="match status" value="1"/>
</dbReference>
<dbReference type="PROSITE" id="PS00296">
    <property type="entry name" value="CHAPERONINS_CPN60"/>
    <property type="match status" value="1"/>
</dbReference>